<organism>
    <name type="scientific">Brucella ovis (strain ATCC 25840 / 63/290 / NCTC 10512)</name>
    <dbReference type="NCBI Taxonomy" id="444178"/>
    <lineage>
        <taxon>Bacteria</taxon>
        <taxon>Pseudomonadati</taxon>
        <taxon>Pseudomonadota</taxon>
        <taxon>Alphaproteobacteria</taxon>
        <taxon>Hyphomicrobiales</taxon>
        <taxon>Brucellaceae</taxon>
        <taxon>Brucella/Ochrobactrum group</taxon>
        <taxon>Brucella</taxon>
    </lineage>
</organism>
<accession>A5VPV2</accession>
<evidence type="ECO:0000255" key="1">
    <source>
        <dbReference type="HAMAP-Rule" id="MF_00073"/>
    </source>
</evidence>
<protein>
    <recommendedName>
        <fullName evidence="1">Transcription antitermination protein NusB</fullName>
    </recommendedName>
    <alternativeName>
        <fullName evidence="1">Antitermination factor NusB</fullName>
    </alternativeName>
</protein>
<name>NUSB_BRUO2</name>
<comment type="function">
    <text evidence="1">Involved in transcription antitermination. Required for transcription of ribosomal RNA (rRNA) genes. Binds specifically to the boxA antiterminator sequence of the ribosomal RNA (rrn) operons.</text>
</comment>
<comment type="similarity">
    <text evidence="1">Belongs to the NusB family.</text>
</comment>
<reference key="1">
    <citation type="journal article" date="2009" name="PLoS ONE">
        <title>Genome degradation in Brucella ovis corresponds with narrowing of its host range and tissue tropism.</title>
        <authorList>
            <person name="Tsolis R.M."/>
            <person name="Seshadri R."/>
            <person name="Santos R.L."/>
            <person name="Sangari F.J."/>
            <person name="Lobo J.M."/>
            <person name="de Jong M.F."/>
            <person name="Ren Q."/>
            <person name="Myers G."/>
            <person name="Brinkac L.M."/>
            <person name="Nelson W.C."/>
            <person name="Deboy R.T."/>
            <person name="Angiuoli S."/>
            <person name="Khouri H."/>
            <person name="Dimitrov G."/>
            <person name="Robinson J.R."/>
            <person name="Mulligan S."/>
            <person name="Walker R.L."/>
            <person name="Elzer P.E."/>
            <person name="Hassan K.A."/>
            <person name="Paulsen I.T."/>
        </authorList>
    </citation>
    <scope>NUCLEOTIDE SEQUENCE [LARGE SCALE GENOMIC DNA]</scope>
    <source>
        <strain>ATCC 25840 / 63/290 / NCTC 10512</strain>
    </source>
</reference>
<proteinExistence type="inferred from homology"/>
<sequence>MNSIPEGRPTPNLPRTANKRGVARLAAVQALYQMDVAGTGVMEVVAEYEAFRLGKEVDGTQYLDADPQWFRAIVAGVVEDQLKLDPMIHQALTEDWPLSRLDSTLRAILRAGAWELKARKDVPTAVIVSEYVDIAKAFYTEDEPKLVNAVLDRLALVIRGESRGAKPRHKS</sequence>
<feature type="chain" id="PRO_1000023709" description="Transcription antitermination protein NusB">
    <location>
        <begin position="1"/>
        <end position="171"/>
    </location>
</feature>
<dbReference type="EMBL" id="CP000708">
    <property type="protein sequence ID" value="ABQ61885.1"/>
    <property type="molecule type" value="Genomic_DNA"/>
</dbReference>
<dbReference type="RefSeq" id="WP_004688221.1">
    <property type="nucleotide sequence ID" value="NC_009505.1"/>
</dbReference>
<dbReference type="SMR" id="A5VPV2"/>
<dbReference type="GeneID" id="97533920"/>
<dbReference type="KEGG" id="bov:BOV_0763"/>
<dbReference type="HOGENOM" id="CLU_087843_4_0_5"/>
<dbReference type="PhylomeDB" id="A5VPV2"/>
<dbReference type="Proteomes" id="UP000006383">
    <property type="component" value="Chromosome I"/>
</dbReference>
<dbReference type="GO" id="GO:0005829">
    <property type="term" value="C:cytosol"/>
    <property type="evidence" value="ECO:0007669"/>
    <property type="project" value="TreeGrafter"/>
</dbReference>
<dbReference type="GO" id="GO:0003723">
    <property type="term" value="F:RNA binding"/>
    <property type="evidence" value="ECO:0007669"/>
    <property type="project" value="UniProtKB-UniRule"/>
</dbReference>
<dbReference type="GO" id="GO:0006353">
    <property type="term" value="P:DNA-templated transcription termination"/>
    <property type="evidence" value="ECO:0007669"/>
    <property type="project" value="UniProtKB-UniRule"/>
</dbReference>
<dbReference type="GO" id="GO:0031564">
    <property type="term" value="P:transcription antitermination"/>
    <property type="evidence" value="ECO:0007669"/>
    <property type="project" value="UniProtKB-KW"/>
</dbReference>
<dbReference type="Gene3D" id="1.10.940.10">
    <property type="entry name" value="NusB-like"/>
    <property type="match status" value="1"/>
</dbReference>
<dbReference type="HAMAP" id="MF_00073">
    <property type="entry name" value="NusB"/>
    <property type="match status" value="1"/>
</dbReference>
<dbReference type="InterPro" id="IPR035926">
    <property type="entry name" value="NusB-like_sf"/>
</dbReference>
<dbReference type="InterPro" id="IPR011605">
    <property type="entry name" value="NusB_fam"/>
</dbReference>
<dbReference type="InterPro" id="IPR006027">
    <property type="entry name" value="NusB_RsmB_TIM44"/>
</dbReference>
<dbReference type="NCBIfam" id="TIGR01951">
    <property type="entry name" value="nusB"/>
    <property type="match status" value="1"/>
</dbReference>
<dbReference type="PANTHER" id="PTHR11078:SF3">
    <property type="entry name" value="ANTITERMINATION NUSB DOMAIN-CONTAINING PROTEIN"/>
    <property type="match status" value="1"/>
</dbReference>
<dbReference type="PANTHER" id="PTHR11078">
    <property type="entry name" value="N UTILIZATION SUBSTANCE PROTEIN B-RELATED"/>
    <property type="match status" value="1"/>
</dbReference>
<dbReference type="Pfam" id="PF01029">
    <property type="entry name" value="NusB"/>
    <property type="match status" value="1"/>
</dbReference>
<dbReference type="SUPFAM" id="SSF48013">
    <property type="entry name" value="NusB-like"/>
    <property type="match status" value="1"/>
</dbReference>
<keyword id="KW-0694">RNA-binding</keyword>
<keyword id="KW-0804">Transcription</keyword>
<keyword id="KW-0889">Transcription antitermination</keyword>
<keyword id="KW-0805">Transcription regulation</keyword>
<gene>
    <name evidence="1" type="primary">nusB</name>
    <name type="ordered locus">BOV_0763</name>
</gene>